<feature type="signal peptide" evidence="2">
    <location>
        <begin position="1"/>
        <end position="23"/>
    </location>
</feature>
<feature type="propeptide" id="PRO_0000024093" evidence="2">
    <location>
        <begin position="24"/>
        <end position="77"/>
    </location>
</feature>
<feature type="peptide" id="PRO_0000024094" description="Phytosulfokine-alpha-like" evidence="2">
    <location>
        <begin position="78"/>
        <end position="82"/>
    </location>
</feature>
<feature type="peptide" id="PRO_0000024095" description="Phytosulfokine-beta" evidence="2">
    <location>
        <begin position="78"/>
        <end position="81"/>
    </location>
</feature>
<feature type="propeptide" id="PRO_0000024096" evidence="2">
    <location>
        <begin position="83"/>
        <end position="87"/>
    </location>
</feature>
<feature type="modified residue" description="Sulfotyrosine" evidence="1">
    <location>
        <position position="78"/>
    </location>
</feature>
<feature type="modified residue" description="Sulfotyrosine" evidence="1">
    <location>
        <position position="80"/>
    </location>
</feature>
<protein>
    <recommendedName>
        <fullName>Putative phytosulfokines 4</fullName>
        <shortName>AtPSK4</shortName>
    </recommendedName>
    <component>
        <recommendedName>
            <fullName>Phytosulfokine-alpha-like</fullName>
            <shortName>PSK-alpha-like</shortName>
            <shortName>Phytosulfokine-a-like</shortName>
        </recommendedName>
    </component>
    <component>
        <recommendedName>
            <fullName>Phytosulfokine-beta</fullName>
            <shortName>PSK-beta</shortName>
            <shortName>Phytosulfokine-b</shortName>
        </recommendedName>
    </component>
</protein>
<name>PSK4_ARATH</name>
<proteinExistence type="inferred from homology"/>
<organism>
    <name type="scientific">Arabidopsis thaliana</name>
    <name type="common">Mouse-ear cress</name>
    <dbReference type="NCBI Taxonomy" id="3702"/>
    <lineage>
        <taxon>Eukaryota</taxon>
        <taxon>Viridiplantae</taxon>
        <taxon>Streptophyta</taxon>
        <taxon>Embryophyta</taxon>
        <taxon>Tracheophyta</taxon>
        <taxon>Spermatophyta</taxon>
        <taxon>Magnoliopsida</taxon>
        <taxon>eudicotyledons</taxon>
        <taxon>Gunneridae</taxon>
        <taxon>Pentapetalae</taxon>
        <taxon>rosids</taxon>
        <taxon>malvids</taxon>
        <taxon>Brassicales</taxon>
        <taxon>Brassicaceae</taxon>
        <taxon>Camelineae</taxon>
        <taxon>Arabidopsis</taxon>
    </lineage>
</organism>
<reference key="1">
    <citation type="submission" date="2003-01" db="EMBL/GenBank/DDBJ databases">
        <title>Plant peptide signaling.</title>
        <authorList>
            <person name="Yang H."/>
        </authorList>
    </citation>
    <scope>NUCLEOTIDE SEQUENCE [GENOMIC DNA]</scope>
    <source>
        <strain>cv. Columbia</strain>
    </source>
</reference>
<reference key="2">
    <citation type="journal article" date="1999" name="Nature">
        <title>Sequence and analysis of chromosome 4 of the plant Arabidopsis thaliana.</title>
        <authorList>
            <person name="Mayer K.F.X."/>
            <person name="Schueller C."/>
            <person name="Wambutt R."/>
            <person name="Murphy G."/>
            <person name="Volckaert G."/>
            <person name="Pohl T."/>
            <person name="Duesterhoeft A."/>
            <person name="Stiekema W."/>
            <person name="Entian K.-D."/>
            <person name="Terryn N."/>
            <person name="Harris B."/>
            <person name="Ansorge W."/>
            <person name="Brandt P."/>
            <person name="Grivell L.A."/>
            <person name="Rieger M."/>
            <person name="Weichselgartner M."/>
            <person name="de Simone V."/>
            <person name="Obermaier B."/>
            <person name="Mache R."/>
            <person name="Mueller M."/>
            <person name="Kreis M."/>
            <person name="Delseny M."/>
            <person name="Puigdomenech P."/>
            <person name="Watson M."/>
            <person name="Schmidtheini T."/>
            <person name="Reichert B."/>
            <person name="Portetelle D."/>
            <person name="Perez-Alonso M."/>
            <person name="Boutry M."/>
            <person name="Bancroft I."/>
            <person name="Vos P."/>
            <person name="Hoheisel J."/>
            <person name="Zimmermann W."/>
            <person name="Wedler H."/>
            <person name="Ridley P."/>
            <person name="Langham S.-A."/>
            <person name="McCullagh B."/>
            <person name="Bilham L."/>
            <person name="Robben J."/>
            <person name="van der Schueren J."/>
            <person name="Grymonprez B."/>
            <person name="Chuang Y.-J."/>
            <person name="Vandenbussche F."/>
            <person name="Braeken M."/>
            <person name="Weltjens I."/>
            <person name="Voet M."/>
            <person name="Bastiaens I."/>
            <person name="Aert R."/>
            <person name="Defoor E."/>
            <person name="Weitzenegger T."/>
            <person name="Bothe G."/>
            <person name="Ramsperger U."/>
            <person name="Hilbert H."/>
            <person name="Braun M."/>
            <person name="Holzer E."/>
            <person name="Brandt A."/>
            <person name="Peters S."/>
            <person name="van Staveren M."/>
            <person name="Dirkse W."/>
            <person name="Mooijman P."/>
            <person name="Klein Lankhorst R."/>
            <person name="Rose M."/>
            <person name="Hauf J."/>
            <person name="Koetter P."/>
            <person name="Berneiser S."/>
            <person name="Hempel S."/>
            <person name="Feldpausch M."/>
            <person name="Lamberth S."/>
            <person name="Van den Daele H."/>
            <person name="De Keyser A."/>
            <person name="Buysshaert C."/>
            <person name="Gielen J."/>
            <person name="Villarroel R."/>
            <person name="De Clercq R."/>
            <person name="van Montagu M."/>
            <person name="Rogers J."/>
            <person name="Cronin A."/>
            <person name="Quail M.A."/>
            <person name="Bray-Allen S."/>
            <person name="Clark L."/>
            <person name="Doggett J."/>
            <person name="Hall S."/>
            <person name="Kay M."/>
            <person name="Lennard N."/>
            <person name="McLay K."/>
            <person name="Mayes R."/>
            <person name="Pettett A."/>
            <person name="Rajandream M.A."/>
            <person name="Lyne M."/>
            <person name="Benes V."/>
            <person name="Rechmann S."/>
            <person name="Borkova D."/>
            <person name="Bloecker H."/>
            <person name="Scharfe M."/>
            <person name="Grimm M."/>
            <person name="Loehnert T.-H."/>
            <person name="Dose S."/>
            <person name="de Haan M."/>
            <person name="Maarse A.C."/>
            <person name="Schaefer M."/>
            <person name="Mueller-Auer S."/>
            <person name="Gabel C."/>
            <person name="Fuchs M."/>
            <person name="Fartmann B."/>
            <person name="Granderath K."/>
            <person name="Dauner D."/>
            <person name="Herzl A."/>
            <person name="Neumann S."/>
            <person name="Argiriou A."/>
            <person name="Vitale D."/>
            <person name="Liguori R."/>
            <person name="Piravandi E."/>
            <person name="Massenet O."/>
            <person name="Quigley F."/>
            <person name="Clabauld G."/>
            <person name="Muendlein A."/>
            <person name="Felber R."/>
            <person name="Schnabl S."/>
            <person name="Hiller R."/>
            <person name="Schmidt W."/>
            <person name="Lecharny A."/>
            <person name="Aubourg S."/>
            <person name="Chefdor F."/>
            <person name="Cooke R."/>
            <person name="Berger C."/>
            <person name="Monfort A."/>
            <person name="Casacuberta E."/>
            <person name="Gibbons T."/>
            <person name="Weber N."/>
            <person name="Vandenbol M."/>
            <person name="Bargues M."/>
            <person name="Terol J."/>
            <person name="Torres A."/>
            <person name="Perez-Perez A."/>
            <person name="Purnelle B."/>
            <person name="Bent E."/>
            <person name="Johnson S."/>
            <person name="Tacon D."/>
            <person name="Jesse T."/>
            <person name="Heijnen L."/>
            <person name="Schwarz S."/>
            <person name="Scholler P."/>
            <person name="Heber S."/>
            <person name="Francs P."/>
            <person name="Bielke C."/>
            <person name="Frishman D."/>
            <person name="Haase D."/>
            <person name="Lemcke K."/>
            <person name="Mewes H.-W."/>
            <person name="Stocker S."/>
            <person name="Zaccaria P."/>
            <person name="Bevan M."/>
            <person name="Wilson R.K."/>
            <person name="de la Bastide M."/>
            <person name="Habermann K."/>
            <person name="Parnell L."/>
            <person name="Dedhia N."/>
            <person name="Gnoj L."/>
            <person name="Schutz K."/>
            <person name="Huang E."/>
            <person name="Spiegel L."/>
            <person name="Sekhon M."/>
            <person name="Murray J."/>
            <person name="Sheet P."/>
            <person name="Cordes M."/>
            <person name="Abu-Threideh J."/>
            <person name="Stoneking T."/>
            <person name="Kalicki J."/>
            <person name="Graves T."/>
            <person name="Harmon G."/>
            <person name="Edwards J."/>
            <person name="Latreille P."/>
            <person name="Courtney L."/>
            <person name="Cloud J."/>
            <person name="Abbott A."/>
            <person name="Scott K."/>
            <person name="Johnson D."/>
            <person name="Minx P."/>
            <person name="Bentley D."/>
            <person name="Fulton B."/>
            <person name="Miller N."/>
            <person name="Greco T."/>
            <person name="Kemp K."/>
            <person name="Kramer J."/>
            <person name="Fulton L."/>
            <person name="Mardis E."/>
            <person name="Dante M."/>
            <person name="Pepin K."/>
            <person name="Hillier L.W."/>
            <person name="Nelson J."/>
            <person name="Spieth J."/>
            <person name="Ryan E."/>
            <person name="Andrews S."/>
            <person name="Geisel C."/>
            <person name="Layman D."/>
            <person name="Du H."/>
            <person name="Ali J."/>
            <person name="Berghoff A."/>
            <person name="Jones K."/>
            <person name="Drone K."/>
            <person name="Cotton M."/>
            <person name="Joshu C."/>
            <person name="Antonoiu B."/>
            <person name="Zidanic M."/>
            <person name="Strong C."/>
            <person name="Sun H."/>
            <person name="Lamar B."/>
            <person name="Yordan C."/>
            <person name="Ma P."/>
            <person name="Zhong J."/>
            <person name="Preston R."/>
            <person name="Vil D."/>
            <person name="Shekher M."/>
            <person name="Matero A."/>
            <person name="Shah R."/>
            <person name="Swaby I.K."/>
            <person name="O'Shaughnessy A."/>
            <person name="Rodriguez M."/>
            <person name="Hoffman J."/>
            <person name="Till S."/>
            <person name="Granat S."/>
            <person name="Shohdy N."/>
            <person name="Hasegawa A."/>
            <person name="Hameed A."/>
            <person name="Lodhi M."/>
            <person name="Johnson A."/>
            <person name="Chen E."/>
            <person name="Marra M.A."/>
            <person name="Martienssen R."/>
            <person name="McCombie W.R."/>
        </authorList>
    </citation>
    <scope>NUCLEOTIDE SEQUENCE [LARGE SCALE GENOMIC DNA]</scope>
    <source>
        <strain>cv. Columbia</strain>
    </source>
</reference>
<reference key="3">
    <citation type="journal article" date="2017" name="Plant J.">
        <title>Araport11: a complete reannotation of the Arabidopsis thaliana reference genome.</title>
        <authorList>
            <person name="Cheng C.Y."/>
            <person name="Krishnakumar V."/>
            <person name="Chan A.P."/>
            <person name="Thibaud-Nissen F."/>
            <person name="Schobel S."/>
            <person name="Town C.D."/>
        </authorList>
    </citation>
    <scope>GENOME REANNOTATION</scope>
    <source>
        <strain>cv. Columbia</strain>
    </source>
</reference>
<reference key="4">
    <citation type="journal article" date="2002" name="Plant Sci.">
        <title>Comparative analysis of PSK peptide growth factor precursor homologs.</title>
        <authorList>
            <person name="Lorbiecke R."/>
            <person name="Sauter M.M."/>
        </authorList>
    </citation>
    <scope>IDENTIFICATION</scope>
</reference>
<sequence>MANLSTLITIALLLCATMLTCSARPEPAYFASFTTSPADTLSLEMIESKLHEVAGESCDKEDDEDCLVRRTLTAHLDYIYTHKNNHH</sequence>
<comment type="function">
    <text evidence="1">Promotes plant cell differentiation, organogenesis and somatic embryogenesis as well as cell proliferation.</text>
</comment>
<comment type="subcellular location">
    <subcellularLocation>
        <location evidence="1">Secreted</location>
    </subcellularLocation>
</comment>
<comment type="PTM">
    <text evidence="1">Sulfation is important for activity and for the binding to a putative membrane receptor.</text>
</comment>
<comment type="similarity">
    <text evidence="3">Belongs to the phytosulfokine family.</text>
</comment>
<comment type="caution">
    <text evidence="3">This potential protein codes for a PSK precursor that would produce a PSK-alpha that differs in the last residue (His) from a normal PSK-alpha (Gln). Furthermore there are no ESTs or cDNAs so far for this potential gene.</text>
</comment>
<keyword id="KW-0217">Developmental protein</keyword>
<keyword id="KW-0221">Differentiation</keyword>
<keyword id="KW-0339">Growth factor</keyword>
<keyword id="KW-1185">Reference proteome</keyword>
<keyword id="KW-0964">Secreted</keyword>
<keyword id="KW-0732">Signal</keyword>
<keyword id="KW-0765">Sulfation</keyword>
<accession>Q9SZG4</accession>
<accession>Q7PCB9</accession>
<dbReference type="EMBL" id="AB100374">
    <property type="protein sequence ID" value="BAC55582.1"/>
    <property type="molecule type" value="Genomic_DNA"/>
</dbReference>
<dbReference type="EMBL" id="AL035605">
    <property type="protein sequence ID" value="CAB38311.1"/>
    <property type="molecule type" value="Genomic_DNA"/>
</dbReference>
<dbReference type="EMBL" id="AL161592">
    <property type="protein sequence ID" value="CAB80437.1"/>
    <property type="molecule type" value="Genomic_DNA"/>
</dbReference>
<dbReference type="EMBL" id="CP002687">
    <property type="protein sequence ID" value="AEE86831.1"/>
    <property type="molecule type" value="Genomic_DNA"/>
</dbReference>
<dbReference type="EMBL" id="BK000110">
    <property type="protein sequence ID" value="DAA00274.1"/>
    <property type="molecule type" value="mRNA"/>
</dbReference>
<dbReference type="PIR" id="T04729">
    <property type="entry name" value="T04729"/>
</dbReference>
<dbReference type="STRING" id="3702.Q9SZG4"/>
<dbReference type="PaxDb" id="3702-AT4G37720.1"/>
<dbReference type="EnsemblPlants" id="AT4G37720.1">
    <property type="protein sequence ID" value="AT4G37720.1"/>
    <property type="gene ID" value="AT4G37720"/>
</dbReference>
<dbReference type="Gramene" id="AT4G37720.1">
    <property type="protein sequence ID" value="AT4G37720.1"/>
    <property type="gene ID" value="AT4G37720"/>
</dbReference>
<dbReference type="KEGG" id="ath:AT4G37720"/>
<dbReference type="Araport" id="AT4G37720"/>
<dbReference type="TAIR" id="AT4G37720">
    <property type="gene designation" value="PSK6"/>
</dbReference>
<dbReference type="HOGENOM" id="CLU_165727_0_1_1"/>
<dbReference type="InParanoid" id="Q9SZG4"/>
<dbReference type="OMA" id="GVENCEG"/>
<dbReference type="PhylomeDB" id="Q9SZG4"/>
<dbReference type="PRO" id="PR:Q9SZG4"/>
<dbReference type="Proteomes" id="UP000006548">
    <property type="component" value="Chromosome 4"/>
</dbReference>
<dbReference type="ExpressionAtlas" id="Q9SZG4">
    <property type="expression patterns" value="baseline and differential"/>
</dbReference>
<dbReference type="GO" id="GO:0031012">
    <property type="term" value="C:extracellular matrix"/>
    <property type="evidence" value="ECO:0000250"/>
    <property type="project" value="TAIR"/>
</dbReference>
<dbReference type="GO" id="GO:0005576">
    <property type="term" value="C:extracellular region"/>
    <property type="evidence" value="ECO:0007669"/>
    <property type="project" value="UniProtKB-SubCell"/>
</dbReference>
<dbReference type="GO" id="GO:0008083">
    <property type="term" value="F:growth factor activity"/>
    <property type="evidence" value="ECO:0007669"/>
    <property type="project" value="UniProtKB-KW"/>
</dbReference>
<dbReference type="GO" id="GO:0030154">
    <property type="term" value="P:cell differentiation"/>
    <property type="evidence" value="ECO:0000250"/>
    <property type="project" value="TAIR"/>
</dbReference>
<dbReference type="GO" id="GO:0008283">
    <property type="term" value="P:cell population proliferation"/>
    <property type="evidence" value="ECO:0007669"/>
    <property type="project" value="InterPro"/>
</dbReference>
<dbReference type="InterPro" id="IPR009438">
    <property type="entry name" value="Phytosulfokine"/>
</dbReference>
<dbReference type="PANTHER" id="PTHR33285">
    <property type="entry name" value="PHYTOSULFOKINES 3"/>
    <property type="match status" value="1"/>
</dbReference>
<dbReference type="PANTHER" id="PTHR33285:SF42">
    <property type="entry name" value="PHYTOSULFOKINES 4-RELATED"/>
    <property type="match status" value="1"/>
</dbReference>
<dbReference type="Pfam" id="PF06404">
    <property type="entry name" value="PSK"/>
    <property type="match status" value="1"/>
</dbReference>
<gene>
    <name type="primary">PSK4</name>
    <name type="ordered locus">At4g37720</name>
    <name type="ORF">F19F18.210</name>
</gene>
<evidence type="ECO:0000250" key="1"/>
<evidence type="ECO:0000255" key="2"/>
<evidence type="ECO:0000305" key="3"/>